<gene>
    <name type="ordered locus">sll0875</name>
</gene>
<dbReference type="EMBL" id="BA000022">
    <property type="protein sequence ID" value="BAA17595.1"/>
    <property type="molecule type" value="Genomic_DNA"/>
</dbReference>
<dbReference type="PIR" id="S77261">
    <property type="entry name" value="S77261"/>
</dbReference>
<dbReference type="STRING" id="1148.gene:10498462"/>
<dbReference type="PaxDb" id="1148-1652675"/>
<dbReference type="EnsemblBacteria" id="BAA17595">
    <property type="protein sequence ID" value="BAA17595"/>
    <property type="gene ID" value="BAA17595"/>
</dbReference>
<dbReference type="KEGG" id="syn:sll0875"/>
<dbReference type="eggNOG" id="COG1836">
    <property type="taxonomic scope" value="Bacteria"/>
</dbReference>
<dbReference type="InParanoid" id="P73555"/>
<dbReference type="PhylomeDB" id="P73555"/>
<dbReference type="Proteomes" id="UP000001425">
    <property type="component" value="Chromosome"/>
</dbReference>
<dbReference type="GO" id="GO:0016020">
    <property type="term" value="C:membrane"/>
    <property type="evidence" value="ECO:0000318"/>
    <property type="project" value="GO_Central"/>
</dbReference>
<dbReference type="GO" id="GO:0005886">
    <property type="term" value="C:plasma membrane"/>
    <property type="evidence" value="ECO:0007669"/>
    <property type="project" value="UniProtKB-SubCell"/>
</dbReference>
<dbReference type="InterPro" id="IPR002794">
    <property type="entry name" value="DUF92_TMEM19"/>
</dbReference>
<dbReference type="NCBIfam" id="TIGR00297">
    <property type="entry name" value="TIGR00297 family protein"/>
    <property type="match status" value="1"/>
</dbReference>
<dbReference type="PANTHER" id="PTHR13353">
    <property type="entry name" value="TRANSMEMBRANE PROTEIN 19"/>
    <property type="match status" value="1"/>
</dbReference>
<dbReference type="PANTHER" id="PTHR13353:SF5">
    <property type="entry name" value="TRANSMEMBRANE PROTEIN 19"/>
    <property type="match status" value="1"/>
</dbReference>
<dbReference type="Pfam" id="PF01940">
    <property type="entry name" value="DUF92"/>
    <property type="match status" value="1"/>
</dbReference>
<evidence type="ECO:0000255" key="1"/>
<evidence type="ECO:0000305" key="2"/>
<name>Y875_SYNY3</name>
<reference key="1">
    <citation type="journal article" date="1996" name="DNA Res.">
        <title>Sequence analysis of the genome of the unicellular cyanobacterium Synechocystis sp. strain PCC6803. II. Sequence determination of the entire genome and assignment of potential protein-coding regions.</title>
        <authorList>
            <person name="Kaneko T."/>
            <person name="Sato S."/>
            <person name="Kotani H."/>
            <person name="Tanaka A."/>
            <person name="Asamizu E."/>
            <person name="Nakamura Y."/>
            <person name="Miyajima N."/>
            <person name="Hirosawa M."/>
            <person name="Sugiura M."/>
            <person name="Sasamoto S."/>
            <person name="Kimura T."/>
            <person name="Hosouchi T."/>
            <person name="Matsuno A."/>
            <person name="Muraki A."/>
            <person name="Nakazaki N."/>
            <person name="Naruo K."/>
            <person name="Okumura S."/>
            <person name="Shimpo S."/>
            <person name="Takeuchi C."/>
            <person name="Wada T."/>
            <person name="Watanabe A."/>
            <person name="Yamada M."/>
            <person name="Yasuda M."/>
            <person name="Tabata S."/>
        </authorList>
    </citation>
    <scope>NUCLEOTIDE SEQUENCE [LARGE SCALE GENOMIC DNA]</scope>
    <source>
        <strain>ATCC 27184 / PCC 6803 / Kazusa</strain>
    </source>
</reference>
<feature type="chain" id="PRO_0000157877" description="Uncharacterized membrane protein sll0875">
    <location>
        <begin position="1"/>
        <end position="258"/>
    </location>
</feature>
<feature type="transmembrane region" description="Helical" evidence="1">
    <location>
        <begin position="14"/>
        <end position="34"/>
    </location>
</feature>
<feature type="transmembrane region" description="Helical" evidence="1">
    <location>
        <begin position="53"/>
        <end position="73"/>
    </location>
</feature>
<feature type="transmembrane region" description="Helical" evidence="1">
    <location>
        <begin position="110"/>
        <end position="130"/>
    </location>
</feature>
<feature type="transmembrane region" description="Helical" evidence="1">
    <location>
        <begin position="185"/>
        <end position="205"/>
    </location>
</feature>
<feature type="transmembrane region" description="Helical" evidence="1">
    <location>
        <begin position="238"/>
        <end position="258"/>
    </location>
</feature>
<sequence length="258" mass="27172">MDNSLLSEIWRQSLAFPWLSAVILNSFLLALAAIAPKKLLTPWGYGHAWVLGVIIWAALGWRGYLVVLAYFFVGSAVTRIGQKEKEAAGIAEKRSGQRGPENVWGSALTAALCALAIAFGPEPWQLWLALGYVASFSTKLSDTTASEVGKAYGKNTFLITTLQPVPRGTEGAVSVEGTLAGFAAGLALAVLGYGVGLISFGGIIFSTLAAFIATNLESVIGATLQNKWPWLTNEVVNGINTFLGAAIAIGIEATAQLI</sequence>
<organism>
    <name type="scientific">Synechocystis sp. (strain ATCC 27184 / PCC 6803 / Kazusa)</name>
    <dbReference type="NCBI Taxonomy" id="1111708"/>
    <lineage>
        <taxon>Bacteria</taxon>
        <taxon>Bacillati</taxon>
        <taxon>Cyanobacteriota</taxon>
        <taxon>Cyanophyceae</taxon>
        <taxon>Synechococcales</taxon>
        <taxon>Merismopediaceae</taxon>
        <taxon>Synechocystis</taxon>
    </lineage>
</organism>
<accession>P73555</accession>
<proteinExistence type="inferred from homology"/>
<comment type="subcellular location">
    <subcellularLocation>
        <location evidence="2">Cell membrane</location>
        <topology evidence="2">Multi-pass membrane protein</topology>
    </subcellularLocation>
</comment>
<comment type="similarity">
    <text evidence="2">Belongs to the TMEM19 family.</text>
</comment>
<protein>
    <recommendedName>
        <fullName>Uncharacterized membrane protein sll0875</fullName>
    </recommendedName>
</protein>
<keyword id="KW-1003">Cell membrane</keyword>
<keyword id="KW-0472">Membrane</keyword>
<keyword id="KW-1185">Reference proteome</keyword>
<keyword id="KW-0812">Transmembrane</keyword>
<keyword id="KW-1133">Transmembrane helix</keyword>